<sequence>MTEQKGRYLFTSESVTEGHPDKMADQISDAVLDAILALDPRARVACETLLTTGLVVVTGEITTHAYVDIPNLVRDVVRDIGYTRAKYGFDGSTCGVMTAIDPQSPDIAQGVDVAIEVRGEVNEKELEIGAGDQGMMFGFACDETPELMPLPISLAHRLARRLAQVRKNGTLPYLRPDGKTQVTIEYEDGRPKRIDTIVISAQHDPDTTQEQIRKDVIDYVILDVVDRNLIDDRTRYFINPTGRFVVGGPQGDTGLTGRKIIVDTYGGYARHGGGAFSGKDPTKVDRSGAYAARWVAKNIVAAGLARKCEVQVAYAIGVAHPVSILVTTFGTGKLPDERLAQLVRETFDLRPGAIIRDLDLRRPIYRQVAAYGHFGRPDLDLPWERTDKVDLLREKAGI</sequence>
<accession>Q67T90</accession>
<comment type="function">
    <text evidence="1">Catalyzes the formation of S-adenosylmethionine (AdoMet) from methionine and ATP. The overall synthetic reaction is composed of two sequential steps, AdoMet formation and the subsequent tripolyphosphate hydrolysis which occurs prior to release of AdoMet from the enzyme.</text>
</comment>
<comment type="catalytic activity">
    <reaction evidence="1">
        <text>L-methionine + ATP + H2O = S-adenosyl-L-methionine + phosphate + diphosphate</text>
        <dbReference type="Rhea" id="RHEA:21080"/>
        <dbReference type="ChEBI" id="CHEBI:15377"/>
        <dbReference type="ChEBI" id="CHEBI:30616"/>
        <dbReference type="ChEBI" id="CHEBI:33019"/>
        <dbReference type="ChEBI" id="CHEBI:43474"/>
        <dbReference type="ChEBI" id="CHEBI:57844"/>
        <dbReference type="ChEBI" id="CHEBI:59789"/>
        <dbReference type="EC" id="2.5.1.6"/>
    </reaction>
</comment>
<comment type="cofactor">
    <cofactor evidence="1">
        <name>Mg(2+)</name>
        <dbReference type="ChEBI" id="CHEBI:18420"/>
    </cofactor>
    <text evidence="1">Binds 2 divalent ions per subunit.</text>
</comment>
<comment type="cofactor">
    <cofactor evidence="1">
        <name>K(+)</name>
        <dbReference type="ChEBI" id="CHEBI:29103"/>
    </cofactor>
    <text evidence="1">Binds 1 potassium ion per subunit.</text>
</comment>
<comment type="pathway">
    <text evidence="1">Amino-acid biosynthesis; S-adenosyl-L-methionine biosynthesis; S-adenosyl-L-methionine from L-methionine: step 1/1.</text>
</comment>
<comment type="subunit">
    <text evidence="1">Homotetramer; dimer of dimers.</text>
</comment>
<comment type="subcellular location">
    <subcellularLocation>
        <location evidence="1">Cytoplasm</location>
    </subcellularLocation>
</comment>
<comment type="similarity">
    <text evidence="1">Belongs to the AdoMet synthase family.</text>
</comment>
<reference key="1">
    <citation type="journal article" date="2004" name="Nucleic Acids Res.">
        <title>Genome sequence of Symbiobacterium thermophilum, an uncultivable bacterium that depends on microbial commensalism.</title>
        <authorList>
            <person name="Ueda K."/>
            <person name="Yamashita A."/>
            <person name="Ishikawa J."/>
            <person name="Shimada M."/>
            <person name="Watsuji T."/>
            <person name="Morimura K."/>
            <person name="Ikeda H."/>
            <person name="Hattori M."/>
            <person name="Beppu T."/>
        </authorList>
    </citation>
    <scope>NUCLEOTIDE SEQUENCE [LARGE SCALE GENOMIC DNA]</scope>
    <source>
        <strain>DSM 24528 / JCM 14929 / IAM 14863 / T</strain>
    </source>
</reference>
<evidence type="ECO:0000255" key="1">
    <source>
        <dbReference type="HAMAP-Rule" id="MF_00086"/>
    </source>
</evidence>
<protein>
    <recommendedName>
        <fullName evidence="1">S-adenosylmethionine synthase</fullName>
        <shortName evidence="1">AdoMet synthase</shortName>
        <ecNumber evidence="1">2.5.1.6</ecNumber>
    </recommendedName>
    <alternativeName>
        <fullName evidence="1">MAT</fullName>
    </alternativeName>
    <alternativeName>
        <fullName evidence="1">Methionine adenosyltransferase</fullName>
    </alternativeName>
</protein>
<gene>
    <name evidence="1" type="primary">metK</name>
    <name type="ordered locus">STH118</name>
</gene>
<name>METK_SYMTH</name>
<dbReference type="EC" id="2.5.1.6" evidence="1"/>
<dbReference type="EMBL" id="AP006840">
    <property type="protein sequence ID" value="BAD39103.1"/>
    <property type="molecule type" value="Genomic_DNA"/>
</dbReference>
<dbReference type="RefSeq" id="WP_011194253.1">
    <property type="nucleotide sequence ID" value="NC_006177.1"/>
</dbReference>
<dbReference type="SMR" id="Q67T90"/>
<dbReference type="STRING" id="292459.STH118"/>
<dbReference type="KEGG" id="sth:STH118"/>
<dbReference type="eggNOG" id="COG0192">
    <property type="taxonomic scope" value="Bacteria"/>
</dbReference>
<dbReference type="HOGENOM" id="CLU_041802_1_1_9"/>
<dbReference type="OrthoDB" id="9801686at2"/>
<dbReference type="UniPathway" id="UPA00315">
    <property type="reaction ID" value="UER00080"/>
</dbReference>
<dbReference type="Proteomes" id="UP000000417">
    <property type="component" value="Chromosome"/>
</dbReference>
<dbReference type="GO" id="GO:0005737">
    <property type="term" value="C:cytoplasm"/>
    <property type="evidence" value="ECO:0007669"/>
    <property type="project" value="UniProtKB-SubCell"/>
</dbReference>
<dbReference type="GO" id="GO:0005524">
    <property type="term" value="F:ATP binding"/>
    <property type="evidence" value="ECO:0007669"/>
    <property type="project" value="UniProtKB-UniRule"/>
</dbReference>
<dbReference type="GO" id="GO:0000287">
    <property type="term" value="F:magnesium ion binding"/>
    <property type="evidence" value="ECO:0007669"/>
    <property type="project" value="UniProtKB-UniRule"/>
</dbReference>
<dbReference type="GO" id="GO:0004478">
    <property type="term" value="F:methionine adenosyltransferase activity"/>
    <property type="evidence" value="ECO:0007669"/>
    <property type="project" value="UniProtKB-UniRule"/>
</dbReference>
<dbReference type="GO" id="GO:0006730">
    <property type="term" value="P:one-carbon metabolic process"/>
    <property type="evidence" value="ECO:0007669"/>
    <property type="project" value="UniProtKB-KW"/>
</dbReference>
<dbReference type="GO" id="GO:0006556">
    <property type="term" value="P:S-adenosylmethionine biosynthetic process"/>
    <property type="evidence" value="ECO:0007669"/>
    <property type="project" value="UniProtKB-UniRule"/>
</dbReference>
<dbReference type="CDD" id="cd18079">
    <property type="entry name" value="S-AdoMet_synt"/>
    <property type="match status" value="1"/>
</dbReference>
<dbReference type="FunFam" id="3.30.300.10:FF:000003">
    <property type="entry name" value="S-adenosylmethionine synthase"/>
    <property type="match status" value="1"/>
</dbReference>
<dbReference type="FunFam" id="3.30.300.10:FF:000004">
    <property type="entry name" value="S-adenosylmethionine synthase"/>
    <property type="match status" value="1"/>
</dbReference>
<dbReference type="Gene3D" id="3.30.300.10">
    <property type="match status" value="3"/>
</dbReference>
<dbReference type="HAMAP" id="MF_00086">
    <property type="entry name" value="S_AdoMet_synth1"/>
    <property type="match status" value="1"/>
</dbReference>
<dbReference type="InterPro" id="IPR022631">
    <property type="entry name" value="ADOMET_SYNTHASE_CS"/>
</dbReference>
<dbReference type="InterPro" id="IPR022630">
    <property type="entry name" value="S-AdoMet_synt_C"/>
</dbReference>
<dbReference type="InterPro" id="IPR022629">
    <property type="entry name" value="S-AdoMet_synt_central"/>
</dbReference>
<dbReference type="InterPro" id="IPR022628">
    <property type="entry name" value="S-AdoMet_synt_N"/>
</dbReference>
<dbReference type="InterPro" id="IPR002133">
    <property type="entry name" value="S-AdoMet_synthetase"/>
</dbReference>
<dbReference type="InterPro" id="IPR022636">
    <property type="entry name" value="S-AdoMet_synthetase_sfam"/>
</dbReference>
<dbReference type="NCBIfam" id="TIGR01034">
    <property type="entry name" value="metK"/>
    <property type="match status" value="1"/>
</dbReference>
<dbReference type="PANTHER" id="PTHR11964">
    <property type="entry name" value="S-ADENOSYLMETHIONINE SYNTHETASE"/>
    <property type="match status" value="1"/>
</dbReference>
<dbReference type="Pfam" id="PF02773">
    <property type="entry name" value="S-AdoMet_synt_C"/>
    <property type="match status" value="1"/>
</dbReference>
<dbReference type="Pfam" id="PF02772">
    <property type="entry name" value="S-AdoMet_synt_M"/>
    <property type="match status" value="1"/>
</dbReference>
<dbReference type="Pfam" id="PF00438">
    <property type="entry name" value="S-AdoMet_synt_N"/>
    <property type="match status" value="1"/>
</dbReference>
<dbReference type="PIRSF" id="PIRSF000497">
    <property type="entry name" value="MAT"/>
    <property type="match status" value="1"/>
</dbReference>
<dbReference type="SUPFAM" id="SSF55973">
    <property type="entry name" value="S-adenosylmethionine synthetase"/>
    <property type="match status" value="3"/>
</dbReference>
<dbReference type="PROSITE" id="PS00376">
    <property type="entry name" value="ADOMET_SYNTHASE_1"/>
    <property type="match status" value="1"/>
</dbReference>
<dbReference type="PROSITE" id="PS00377">
    <property type="entry name" value="ADOMET_SYNTHASE_2"/>
    <property type="match status" value="1"/>
</dbReference>
<feature type="chain" id="PRO_0000174608" description="S-adenosylmethionine synthase">
    <location>
        <begin position="1"/>
        <end position="398"/>
    </location>
</feature>
<feature type="region of interest" description="Flexible loop" evidence="1">
    <location>
        <begin position="103"/>
        <end position="113"/>
    </location>
</feature>
<feature type="binding site" description="in other chain" evidence="1">
    <location>
        <position position="19"/>
    </location>
    <ligand>
        <name>ATP</name>
        <dbReference type="ChEBI" id="CHEBI:30616"/>
        <note>ligand shared between two neighboring subunits</note>
    </ligand>
</feature>
<feature type="binding site" evidence="1">
    <location>
        <position position="21"/>
    </location>
    <ligand>
        <name>Mg(2+)</name>
        <dbReference type="ChEBI" id="CHEBI:18420"/>
    </ligand>
</feature>
<feature type="binding site" evidence="1">
    <location>
        <position position="47"/>
    </location>
    <ligand>
        <name>K(+)</name>
        <dbReference type="ChEBI" id="CHEBI:29103"/>
    </ligand>
</feature>
<feature type="binding site" description="in other chain" evidence="1">
    <location>
        <position position="60"/>
    </location>
    <ligand>
        <name>L-methionine</name>
        <dbReference type="ChEBI" id="CHEBI:57844"/>
        <note>ligand shared between two neighboring subunits</note>
    </ligand>
</feature>
<feature type="binding site" description="in other chain" evidence="1">
    <location>
        <position position="103"/>
    </location>
    <ligand>
        <name>L-methionine</name>
        <dbReference type="ChEBI" id="CHEBI:57844"/>
        <note>ligand shared between two neighboring subunits</note>
    </ligand>
</feature>
<feature type="binding site" description="in other chain" evidence="1">
    <location>
        <begin position="177"/>
        <end position="179"/>
    </location>
    <ligand>
        <name>ATP</name>
        <dbReference type="ChEBI" id="CHEBI:30616"/>
        <note>ligand shared between two neighboring subunits</note>
    </ligand>
</feature>
<feature type="binding site" description="in other chain" evidence="1">
    <location>
        <begin position="243"/>
        <end position="244"/>
    </location>
    <ligand>
        <name>ATP</name>
        <dbReference type="ChEBI" id="CHEBI:30616"/>
        <note>ligand shared between two neighboring subunits</note>
    </ligand>
</feature>
<feature type="binding site" evidence="1">
    <location>
        <position position="252"/>
    </location>
    <ligand>
        <name>ATP</name>
        <dbReference type="ChEBI" id="CHEBI:30616"/>
        <note>ligand shared between two neighboring subunits</note>
    </ligand>
</feature>
<feature type="binding site" evidence="1">
    <location>
        <position position="252"/>
    </location>
    <ligand>
        <name>L-methionine</name>
        <dbReference type="ChEBI" id="CHEBI:57844"/>
        <note>ligand shared between two neighboring subunits</note>
    </ligand>
</feature>
<feature type="binding site" description="in other chain" evidence="1">
    <location>
        <begin position="258"/>
        <end position="259"/>
    </location>
    <ligand>
        <name>ATP</name>
        <dbReference type="ChEBI" id="CHEBI:30616"/>
        <note>ligand shared between two neighboring subunits</note>
    </ligand>
</feature>
<feature type="binding site" evidence="1">
    <location>
        <position position="275"/>
    </location>
    <ligand>
        <name>ATP</name>
        <dbReference type="ChEBI" id="CHEBI:30616"/>
        <note>ligand shared between two neighboring subunits</note>
    </ligand>
</feature>
<feature type="binding site" evidence="1">
    <location>
        <position position="279"/>
    </location>
    <ligand>
        <name>ATP</name>
        <dbReference type="ChEBI" id="CHEBI:30616"/>
        <note>ligand shared between two neighboring subunits</note>
    </ligand>
</feature>
<feature type="binding site" description="in other chain" evidence="1">
    <location>
        <position position="283"/>
    </location>
    <ligand>
        <name>L-methionine</name>
        <dbReference type="ChEBI" id="CHEBI:57844"/>
        <note>ligand shared between two neighboring subunits</note>
    </ligand>
</feature>
<keyword id="KW-0067">ATP-binding</keyword>
<keyword id="KW-0963">Cytoplasm</keyword>
<keyword id="KW-0460">Magnesium</keyword>
<keyword id="KW-0479">Metal-binding</keyword>
<keyword id="KW-0547">Nucleotide-binding</keyword>
<keyword id="KW-0554">One-carbon metabolism</keyword>
<keyword id="KW-0630">Potassium</keyword>
<keyword id="KW-1185">Reference proteome</keyword>
<keyword id="KW-0808">Transferase</keyword>
<organism>
    <name type="scientific">Symbiobacterium thermophilum (strain DSM 24528 / JCM 14929 / IAM 14863 / T)</name>
    <dbReference type="NCBI Taxonomy" id="292459"/>
    <lineage>
        <taxon>Bacteria</taxon>
        <taxon>Bacillati</taxon>
        <taxon>Bacillota</taxon>
        <taxon>Clostridia</taxon>
        <taxon>Eubacteriales</taxon>
        <taxon>Symbiobacteriaceae</taxon>
        <taxon>Symbiobacterium</taxon>
    </lineage>
</organism>
<proteinExistence type="inferred from homology"/>